<protein>
    <recommendedName>
        <fullName evidence="9">DNA dC-&gt;dU-editing enzyme APOBEC-3H</fullName>
        <shortName evidence="9">APOBEC3H</shortName>
        <ecNumber evidence="6">3.5.4.38</ecNumber>
    </recommendedName>
    <alternativeName>
        <fullName evidence="9">Apolipoprotein B mRNA-editing enzyme catalytic polypeptide-like 3H</fullName>
        <shortName evidence="7">A3H</shortName>
    </alternativeName>
    <alternativeName>
        <fullName evidence="8">Apolipoprotein B mRNA-editing enzyme catalytic polypeptide-like 3Z3</fullName>
        <shortName evidence="8">A3Z3</shortName>
    </alternativeName>
</protein>
<dbReference type="EC" id="3.5.4.38" evidence="6"/>
<dbReference type="EMBL" id="EU011792">
    <property type="protein sequence ID" value="ABW06962.1"/>
    <property type="molecule type" value="mRNA"/>
</dbReference>
<dbReference type="EMBL" id="EU109281">
    <property type="protein sequence ID" value="ABW83274.1"/>
    <property type="molecule type" value="Genomic_DNA"/>
</dbReference>
<dbReference type="SMR" id="A9QA56"/>
<dbReference type="HOGENOM" id="CLU_047918_0_0_1"/>
<dbReference type="InParanoid" id="A9QA56"/>
<dbReference type="Proteomes" id="UP000011712">
    <property type="component" value="Unplaced"/>
</dbReference>
<dbReference type="GO" id="GO:0005737">
    <property type="term" value="C:cytoplasm"/>
    <property type="evidence" value="ECO:0000318"/>
    <property type="project" value="GO_Central"/>
</dbReference>
<dbReference type="GO" id="GO:0005634">
    <property type="term" value="C:nucleus"/>
    <property type="evidence" value="ECO:0000318"/>
    <property type="project" value="GO_Central"/>
</dbReference>
<dbReference type="GO" id="GO:0000932">
    <property type="term" value="C:P-body"/>
    <property type="evidence" value="ECO:0000318"/>
    <property type="project" value="GO_Central"/>
</dbReference>
<dbReference type="GO" id="GO:0004126">
    <property type="term" value="F:cytidine deaminase activity"/>
    <property type="evidence" value="ECO:0000318"/>
    <property type="project" value="GO_Central"/>
</dbReference>
<dbReference type="GO" id="GO:0003723">
    <property type="term" value="F:RNA binding"/>
    <property type="evidence" value="ECO:0000318"/>
    <property type="project" value="GO_Central"/>
</dbReference>
<dbReference type="GO" id="GO:0008270">
    <property type="term" value="F:zinc ion binding"/>
    <property type="evidence" value="ECO:0007669"/>
    <property type="project" value="InterPro"/>
</dbReference>
<dbReference type="GO" id="GO:0016554">
    <property type="term" value="P:cytidine to uridine editing"/>
    <property type="evidence" value="ECO:0000318"/>
    <property type="project" value="GO_Central"/>
</dbReference>
<dbReference type="GO" id="GO:0051607">
    <property type="term" value="P:defense response to virus"/>
    <property type="evidence" value="ECO:0000318"/>
    <property type="project" value="GO_Central"/>
</dbReference>
<dbReference type="GO" id="GO:0070383">
    <property type="term" value="P:DNA cytosine deamination"/>
    <property type="evidence" value="ECO:0000318"/>
    <property type="project" value="GO_Central"/>
</dbReference>
<dbReference type="GO" id="GO:0045869">
    <property type="term" value="P:negative regulation of single stranded viral RNA replication via double stranded DNA intermediate"/>
    <property type="evidence" value="ECO:0000318"/>
    <property type="project" value="GO_Central"/>
</dbReference>
<dbReference type="CDD" id="cd01283">
    <property type="entry name" value="cytidine_deaminase"/>
    <property type="match status" value="1"/>
</dbReference>
<dbReference type="FunFam" id="3.40.140.10:FF:000047">
    <property type="entry name" value="Apolipoprotein B editing enzyme catalytic polypeptide-like 3H"/>
    <property type="match status" value="1"/>
</dbReference>
<dbReference type="Gene3D" id="3.40.140.10">
    <property type="entry name" value="Cytidine Deaminase, domain 2"/>
    <property type="match status" value="1"/>
</dbReference>
<dbReference type="InterPro" id="IPR016192">
    <property type="entry name" value="APOBEC/CMP_deaminase_Zn-bd"/>
</dbReference>
<dbReference type="InterPro" id="IPR050610">
    <property type="entry name" value="APOBEC_Cyt_Deaminase"/>
</dbReference>
<dbReference type="InterPro" id="IPR002125">
    <property type="entry name" value="CMP_dCMP_dom"/>
</dbReference>
<dbReference type="InterPro" id="IPR016193">
    <property type="entry name" value="Cytidine_deaminase-like"/>
</dbReference>
<dbReference type="PANTHER" id="PTHR13857:SF43">
    <property type="entry name" value="DNA DC-DU-EDITING ENZYME APOBEC-3H"/>
    <property type="match status" value="1"/>
</dbReference>
<dbReference type="PANTHER" id="PTHR13857">
    <property type="entry name" value="MRNA EDITING ENZYME"/>
    <property type="match status" value="1"/>
</dbReference>
<dbReference type="Pfam" id="PF18772">
    <property type="entry name" value="APOBEC2"/>
    <property type="match status" value="1"/>
</dbReference>
<dbReference type="SUPFAM" id="SSF53927">
    <property type="entry name" value="Cytidine deaminase-like"/>
    <property type="match status" value="1"/>
</dbReference>
<dbReference type="PROSITE" id="PS00903">
    <property type="entry name" value="CYT_DCMP_DEAMINASES_1"/>
    <property type="match status" value="1"/>
</dbReference>
<dbReference type="PROSITE" id="PS51747">
    <property type="entry name" value="CYT_DCMP_DEAMINASES_2"/>
    <property type="match status" value="1"/>
</dbReference>
<sequence>MNPLQEVIFCRQFGNQHRVPKPYYRRKTYLCYQLKLPEGTLIHKDCLRNKKKRHAEMCFIDKIKALTRDTSQRFEIICYITWSPCPFCAEELVAFVKDNPHLSLRIFASRLYVHWRWKYQQGLRHLHASGIPVAVMSLPEFEDCWRNFVDHQDRSFQPWPNLDQYSKSIKRRLGKILTPLNDLRNDFRNLKLE</sequence>
<reference evidence="10" key="1">
    <citation type="journal article" date="2008" name="Genome Biol.">
        <title>Functions, structure, and read-through alternative splicing of feline APOBEC3 genes.</title>
        <authorList>
            <person name="Munk C."/>
            <person name="Beck T."/>
            <person name="Zielonka J."/>
            <person name="Hotz-Wagenblatt A."/>
            <person name="Chareza S."/>
            <person name="Battenberg M."/>
            <person name="Thielebein J."/>
            <person name="Cichutek K."/>
            <person name="Bravo I.G."/>
            <person name="O'Brien S.J."/>
            <person name="Lochelt M."/>
            <person name="Yuhki N."/>
        </authorList>
    </citation>
    <scope>NUCLEOTIDE SEQUENCE [MRNA]</scope>
    <scope>TISSUE SPECIFICITY</scope>
</reference>
<reference evidence="9" key="2">
    <citation type="journal article" date="2016" name="J. Virol.">
        <title>A Naturally Occurring Domestic Cat APOBEC3 Variant Confers Resistance to Feline Immunodeficiency Virus Infection.</title>
        <authorList>
            <person name="Yoshikawa R."/>
            <person name="Izumi T."/>
            <person name="Yamada E."/>
            <person name="Nakano Y."/>
            <person name="Misawa N."/>
            <person name="Ren F."/>
            <person name="Carpenter M.A."/>
            <person name="Ikeda T."/>
            <person name="Muenk C."/>
            <person name="Harris R.S."/>
            <person name="Miyazawa T."/>
            <person name="Koyanagi Y."/>
            <person name="Sato K."/>
        </authorList>
    </citation>
    <scope>FUNCTION</scope>
    <scope>CATALYTIC ACTIVITY</scope>
    <scope>VARIANTS SER-65; ILE-65; GLN-68; THR-94 AND ILE-96</scope>
    <scope>MUTAGENESIS OF GLU-56 AND ALA-65</scope>
</reference>
<gene>
    <name evidence="7" type="primary">APOBEC3H</name>
    <name evidence="8" type="synonym">APOBEC3Z3</name>
</gene>
<name>ABC3H_FELCA</name>
<evidence type="ECO:0000250" key="1">
    <source>
        <dbReference type="UniProtKB" id="Q19Q52"/>
    </source>
</evidence>
<evidence type="ECO:0000250" key="2">
    <source>
        <dbReference type="UniProtKB" id="Q6NTF7"/>
    </source>
</evidence>
<evidence type="ECO:0000250" key="3">
    <source>
        <dbReference type="UniProtKB" id="Q9GZX7"/>
    </source>
</evidence>
<evidence type="ECO:0000255" key="4">
    <source>
        <dbReference type="PROSITE-ProRule" id="PRU01083"/>
    </source>
</evidence>
<evidence type="ECO:0000269" key="5">
    <source>
    </source>
</evidence>
<evidence type="ECO:0000269" key="6">
    <source>
    </source>
</evidence>
<evidence type="ECO:0000303" key="7">
    <source>
    </source>
</evidence>
<evidence type="ECO:0000303" key="8">
    <source>
    </source>
</evidence>
<evidence type="ECO:0000305" key="9"/>
<evidence type="ECO:0000312" key="10">
    <source>
        <dbReference type="EMBL" id="ABW06962.1"/>
    </source>
</evidence>
<feature type="chain" id="PRO_0000450385" description="DNA dC-&gt;dU-editing enzyme APOBEC-3H">
    <location>
        <begin position="1"/>
        <end position="193"/>
    </location>
</feature>
<feature type="domain" description="CMP/dCMP-type deaminase" evidence="4">
    <location>
        <begin position="24"/>
        <end position="126"/>
    </location>
</feature>
<feature type="active site" description="Proton donor" evidence="4">
    <location>
        <position position="56"/>
    </location>
</feature>
<feature type="binding site" evidence="4">
    <location>
        <position position="54"/>
    </location>
    <ligand>
        <name>Zn(2+)</name>
        <dbReference type="ChEBI" id="CHEBI:29105"/>
        <note>catalytic</note>
    </ligand>
</feature>
<feature type="binding site" evidence="4">
    <location>
        <position position="85"/>
    </location>
    <ligand>
        <name>Zn(2+)</name>
        <dbReference type="ChEBI" id="CHEBI:29105"/>
        <note>catalytic</note>
    </ligand>
</feature>
<feature type="binding site" evidence="4">
    <location>
        <position position="88"/>
    </location>
    <ligand>
        <name>Zn(2+)</name>
        <dbReference type="ChEBI" id="CHEBI:29105"/>
        <note>catalytic</note>
    </ligand>
</feature>
<feature type="sequence variant" description="In allele A3Z3; haplotype 5; confers resistance to FIV vif-mediated degradation." evidence="6">
    <original>A</original>
    <variation>I</variation>
    <location>
        <position position="65"/>
    </location>
</feature>
<feature type="sequence variant" description="In allele A3Z3; haplotype 2; 3; 4 and 7." evidence="6">
    <original>A</original>
    <variation>S</variation>
    <location>
        <position position="65"/>
    </location>
</feature>
<feature type="sequence variant" description="In allele A3Z3; haplotype 3 and 7." evidence="6">
    <original>R</original>
    <variation>Q</variation>
    <location>
        <position position="68"/>
    </location>
</feature>
<feature type="sequence variant" description="In allele A3Z3; haplotype 3." evidence="6">
    <original>A</original>
    <variation>T</variation>
    <location>
        <position position="94"/>
    </location>
</feature>
<feature type="sequence variant" description="In allele A3Z3; haplotype 4 and 6." evidence="6">
    <original>V</original>
    <variation>I</variation>
    <location>
        <position position="96"/>
    </location>
</feature>
<feature type="mutagenesis site" description="Probable loss of catalytic activity. Fails to suppress FIV infectivity." evidence="6">
    <original>E</original>
    <variation>A</variation>
    <location>
        <position position="56"/>
    </location>
</feature>
<feature type="mutagenesis site" description="Confers resistance to FIV vif-mediated degradation." evidence="6">
    <original>A</original>
    <variation>F</variation>
    <variation>L</variation>
    <variation>Y</variation>
    <location>
        <position position="65"/>
    </location>
</feature>
<accession>A9QA56</accession>
<organism>
    <name type="scientific">Felis catus</name>
    <name type="common">Cat</name>
    <name type="synonym">Felis silvestris catus</name>
    <dbReference type="NCBI Taxonomy" id="9685"/>
    <lineage>
        <taxon>Eukaryota</taxon>
        <taxon>Metazoa</taxon>
        <taxon>Chordata</taxon>
        <taxon>Craniata</taxon>
        <taxon>Vertebrata</taxon>
        <taxon>Euteleostomi</taxon>
        <taxon>Mammalia</taxon>
        <taxon>Eutheria</taxon>
        <taxon>Laurasiatheria</taxon>
        <taxon>Carnivora</taxon>
        <taxon>Feliformia</taxon>
        <taxon>Felidae</taxon>
        <taxon>Felinae</taxon>
        <taxon>Felis</taxon>
    </lineage>
</organism>
<proteinExistence type="evidence at protein level"/>
<keyword id="KW-0963">Cytoplasm</keyword>
<keyword id="KW-0378">Hydrolase</keyword>
<keyword id="KW-0479">Metal-binding</keyword>
<keyword id="KW-1185">Reference proteome</keyword>
<keyword id="KW-0862">Zinc</keyword>
<comment type="function">
    <text evidence="6">DNA deaminase (cytidine deaminase) which acts as an inhibitor of retrovirus replication and retrotransposon mobility via deaminase-dependent and -independent mechanisms (PubMed:26491161). Selectively targets single-stranded DNA and does not deaminate double-stranded DNA or single- or double-stranded RNA (PubMed:26491161). Exhibits single-stranded DNA deaminase activity (in vitro) (PubMed:26491161). Incorporates into the released virions of the virion infectivity factor (vif)-deficient feline immunodeficiency virus (FIV) and suppresses FIV infectivity, probably in a deaminase-dependent manner (in vitro) (PubMed:26491161). Induces G-to-A hypermutations in vif-deficient FIV (in vitro) (PubMed:26491161). The APOBEC3H/APOBEC3Z3 haplotype 5 exhibits antiviral activity against vif-proficient FIV, strains Petaluma, C36 and Shizuoka (in vitro) (PubMed:26491161). Does not exhibit inhibitory activity against feline leukemia virus (FeLV), feline endogenous retrovirus (RD-114 virus) or a long interspersed nuclear element-1 (LINE-1) retrotransposon (in vitro) (PubMed:26491161).</text>
</comment>
<comment type="catalytic activity">
    <reaction evidence="6">
        <text>a 2'-deoxycytidine in single-stranded DNA + H2O + H(+) = a 2'-deoxyuridine in single-stranded DNA + NH4(+)</text>
        <dbReference type="Rhea" id="RHEA:50948"/>
        <dbReference type="Rhea" id="RHEA-COMP:12846"/>
        <dbReference type="Rhea" id="RHEA-COMP:12847"/>
        <dbReference type="ChEBI" id="CHEBI:15377"/>
        <dbReference type="ChEBI" id="CHEBI:15378"/>
        <dbReference type="ChEBI" id="CHEBI:28938"/>
        <dbReference type="ChEBI" id="CHEBI:85452"/>
        <dbReference type="ChEBI" id="CHEBI:133902"/>
        <dbReference type="EC" id="3.5.4.38"/>
    </reaction>
</comment>
<comment type="cofactor">
    <cofactor evidence="3">
        <name>Zn(2+)</name>
        <dbReference type="ChEBI" id="CHEBI:29105"/>
    </cofactor>
</comment>
<comment type="subunit">
    <text evidence="2">Homodimer.</text>
</comment>
<comment type="subcellular location">
    <subcellularLocation>
        <location evidence="1">Cytoplasm</location>
    </subcellularLocation>
</comment>
<comment type="tissue specificity">
    <text evidence="5">Expressed in peripheral blood mononuclear cells.</text>
</comment>
<comment type="polymorphism">
    <text evidence="6">There are at least 7 different APOBEC3H/APOBEC3Z3 haplotypes in the feline population. The displayed haplotype 1 is degraded in a feline immunodeficiency virus (FIV) virion infectivity factor (vif)-dependent manner and is inefficient to block vif-proficient FIV replication. Haplotype 5 is resistant to vif-mediated degradation and is able to suppress vif-proficient FIV infectivity.</text>
</comment>
<comment type="similarity">
    <text evidence="9">Belongs to the cytidine and deoxycytidylate deaminase family.</text>
</comment>